<keyword id="KW-0067">ATP-binding</keyword>
<keyword id="KW-0436">Ligase</keyword>
<keyword id="KW-0460">Magnesium</keyword>
<keyword id="KW-0479">Metal-binding</keyword>
<keyword id="KW-0520">NAD</keyword>
<keyword id="KW-0547">Nucleotide-binding</keyword>
<keyword id="KW-1185">Reference proteome</keyword>
<feature type="chain" id="PRO_0000152157" description="NH(3)-dependent NAD(+) synthetase">
    <location>
        <begin position="1"/>
        <end position="272"/>
    </location>
</feature>
<feature type="binding site" evidence="1">
    <location>
        <begin position="45"/>
        <end position="52"/>
    </location>
    <ligand>
        <name>ATP</name>
        <dbReference type="ChEBI" id="CHEBI:30616"/>
    </ligand>
</feature>
<feature type="binding site" evidence="1">
    <location>
        <position position="51"/>
    </location>
    <ligand>
        <name>Mg(2+)</name>
        <dbReference type="ChEBI" id="CHEBI:18420"/>
    </ligand>
</feature>
<feature type="binding site" evidence="1">
    <location>
        <position position="138"/>
    </location>
    <ligand>
        <name>deamido-NAD(+)</name>
        <dbReference type="ChEBI" id="CHEBI:58437"/>
    </ligand>
</feature>
<feature type="binding site" evidence="1">
    <location>
        <position position="158"/>
    </location>
    <ligand>
        <name>ATP</name>
        <dbReference type="ChEBI" id="CHEBI:30616"/>
    </ligand>
</feature>
<feature type="binding site" evidence="1">
    <location>
        <position position="163"/>
    </location>
    <ligand>
        <name>Mg(2+)</name>
        <dbReference type="ChEBI" id="CHEBI:18420"/>
    </ligand>
</feature>
<feature type="binding site" evidence="1">
    <location>
        <position position="171"/>
    </location>
    <ligand>
        <name>deamido-NAD(+)</name>
        <dbReference type="ChEBI" id="CHEBI:58437"/>
    </ligand>
</feature>
<feature type="binding site" evidence="1">
    <location>
        <position position="178"/>
    </location>
    <ligand>
        <name>deamido-NAD(+)</name>
        <dbReference type="ChEBI" id="CHEBI:58437"/>
    </ligand>
</feature>
<feature type="binding site" evidence="1">
    <location>
        <position position="187"/>
    </location>
    <ligand>
        <name>ATP</name>
        <dbReference type="ChEBI" id="CHEBI:30616"/>
    </ligand>
</feature>
<feature type="binding site" evidence="1">
    <location>
        <position position="209"/>
    </location>
    <ligand>
        <name>ATP</name>
        <dbReference type="ChEBI" id="CHEBI:30616"/>
    </ligand>
</feature>
<feature type="binding site" evidence="1">
    <location>
        <begin position="258"/>
        <end position="259"/>
    </location>
    <ligand>
        <name>deamido-NAD(+)</name>
        <dbReference type="ChEBI" id="CHEBI:58437"/>
    </ligand>
</feature>
<reference key="1">
    <citation type="journal article" date="2003" name="Nature">
        <title>Genome sequence of Bacillus cereus and comparative analysis with Bacillus anthracis.</title>
        <authorList>
            <person name="Ivanova N."/>
            <person name="Sorokin A."/>
            <person name="Anderson I."/>
            <person name="Galleron N."/>
            <person name="Candelon B."/>
            <person name="Kapatral V."/>
            <person name="Bhattacharyya A."/>
            <person name="Reznik G."/>
            <person name="Mikhailova N."/>
            <person name="Lapidus A."/>
            <person name="Chu L."/>
            <person name="Mazur M."/>
            <person name="Goltsman E."/>
            <person name="Larsen N."/>
            <person name="D'Souza M."/>
            <person name="Walunas T."/>
            <person name="Grechkin Y."/>
            <person name="Pusch G."/>
            <person name="Haselkorn R."/>
            <person name="Fonstein M."/>
            <person name="Ehrlich S.D."/>
            <person name="Overbeek R."/>
            <person name="Kyrpides N.C."/>
        </authorList>
    </citation>
    <scope>NUCLEOTIDE SEQUENCE [LARGE SCALE GENOMIC DNA]</scope>
    <source>
        <strain>ATCC 14579 / DSM 31 / CCUG 7414 / JCM 2152 / NBRC 15305 / NCIMB 9373 / NCTC 2599 / NRRL B-3711</strain>
    </source>
</reference>
<accession>Q81EI2</accession>
<gene>
    <name evidence="1" type="primary">nadE</name>
    <name type="ordered locus">BC_1994</name>
</gene>
<protein>
    <recommendedName>
        <fullName evidence="1">NH(3)-dependent NAD(+) synthetase</fullName>
        <ecNumber evidence="1">6.3.1.5</ecNumber>
    </recommendedName>
</protein>
<name>NADE_BACCR</name>
<proteinExistence type="inferred from homology"/>
<organism>
    <name type="scientific">Bacillus cereus (strain ATCC 14579 / DSM 31 / CCUG 7414 / JCM 2152 / NBRC 15305 / NCIMB 9373 / NCTC 2599 / NRRL B-3711)</name>
    <dbReference type="NCBI Taxonomy" id="226900"/>
    <lineage>
        <taxon>Bacteria</taxon>
        <taxon>Bacillati</taxon>
        <taxon>Bacillota</taxon>
        <taxon>Bacilli</taxon>
        <taxon>Bacillales</taxon>
        <taxon>Bacillaceae</taxon>
        <taxon>Bacillus</taxon>
        <taxon>Bacillus cereus group</taxon>
    </lineage>
</organism>
<sequence>MTLQEQIMKALHVQPVIDPKVEIRKRVDFLKDYVKKTGAKGFVLGISGGQDSTLAGRLAQLAVEEIRNEGGNVTFIAVRLPYKVQKDEDDAQLALQFIQADQSVAFDIASTVDAFSNQYENLLGESLTDFNKGNVKARIRMVTQYAIGGQKGLLVIGTDHAAEAVTGFFTKFGDGGADLLPLTGLTKRQGRALLQELGADERLYLKMPTADLLDEKPGQADETELGITYDQLDDYLEGKAVPADVAEKIEKRYTVSEHKRQVPASMFDDWWK</sequence>
<comment type="function">
    <text evidence="1">Catalyzes the ATP-dependent amidation of deamido-NAD to form NAD. Uses ammonia as a nitrogen source.</text>
</comment>
<comment type="catalytic activity">
    <reaction evidence="1">
        <text>deamido-NAD(+) + NH4(+) + ATP = AMP + diphosphate + NAD(+) + H(+)</text>
        <dbReference type="Rhea" id="RHEA:21188"/>
        <dbReference type="ChEBI" id="CHEBI:15378"/>
        <dbReference type="ChEBI" id="CHEBI:28938"/>
        <dbReference type="ChEBI" id="CHEBI:30616"/>
        <dbReference type="ChEBI" id="CHEBI:33019"/>
        <dbReference type="ChEBI" id="CHEBI:57540"/>
        <dbReference type="ChEBI" id="CHEBI:58437"/>
        <dbReference type="ChEBI" id="CHEBI:456215"/>
        <dbReference type="EC" id="6.3.1.5"/>
    </reaction>
</comment>
<comment type="pathway">
    <text evidence="1">Cofactor biosynthesis; NAD(+) biosynthesis; NAD(+) from deamido-NAD(+) (ammonia route): step 1/1.</text>
</comment>
<comment type="subunit">
    <text evidence="1">Homodimer.</text>
</comment>
<comment type="similarity">
    <text evidence="1">Belongs to the NAD synthetase family.</text>
</comment>
<evidence type="ECO:0000255" key="1">
    <source>
        <dbReference type="HAMAP-Rule" id="MF_00193"/>
    </source>
</evidence>
<dbReference type="EC" id="6.3.1.5" evidence="1"/>
<dbReference type="EMBL" id="AE016877">
    <property type="protein sequence ID" value="AAP08964.1"/>
    <property type="molecule type" value="Genomic_DNA"/>
</dbReference>
<dbReference type="RefSeq" id="NP_831763.1">
    <property type="nucleotide sequence ID" value="NC_004722.1"/>
</dbReference>
<dbReference type="RefSeq" id="WP_000174904.1">
    <property type="nucleotide sequence ID" value="NZ_CP138336.1"/>
</dbReference>
<dbReference type="SMR" id="Q81EI2"/>
<dbReference type="STRING" id="226900.BC_1994"/>
<dbReference type="KEGG" id="bce:BC1994"/>
<dbReference type="PATRIC" id="fig|226900.8.peg.2002"/>
<dbReference type="HOGENOM" id="CLU_059327_3_0_9"/>
<dbReference type="OrthoDB" id="9803818at2"/>
<dbReference type="UniPathway" id="UPA00253">
    <property type="reaction ID" value="UER00333"/>
</dbReference>
<dbReference type="Proteomes" id="UP000001417">
    <property type="component" value="Chromosome"/>
</dbReference>
<dbReference type="GO" id="GO:0005737">
    <property type="term" value="C:cytoplasm"/>
    <property type="evidence" value="ECO:0000318"/>
    <property type="project" value="GO_Central"/>
</dbReference>
<dbReference type="GO" id="GO:0005524">
    <property type="term" value="F:ATP binding"/>
    <property type="evidence" value="ECO:0007669"/>
    <property type="project" value="UniProtKB-UniRule"/>
</dbReference>
<dbReference type="GO" id="GO:0004359">
    <property type="term" value="F:glutaminase activity"/>
    <property type="evidence" value="ECO:0007669"/>
    <property type="project" value="InterPro"/>
</dbReference>
<dbReference type="GO" id="GO:0046872">
    <property type="term" value="F:metal ion binding"/>
    <property type="evidence" value="ECO:0007669"/>
    <property type="project" value="UniProtKB-KW"/>
</dbReference>
<dbReference type="GO" id="GO:0003952">
    <property type="term" value="F:NAD+ synthase (glutamine-hydrolyzing) activity"/>
    <property type="evidence" value="ECO:0007669"/>
    <property type="project" value="InterPro"/>
</dbReference>
<dbReference type="GO" id="GO:0008795">
    <property type="term" value="F:NAD+ synthase activity"/>
    <property type="evidence" value="ECO:0007669"/>
    <property type="project" value="UniProtKB-UniRule"/>
</dbReference>
<dbReference type="GO" id="GO:0009435">
    <property type="term" value="P:NAD biosynthetic process"/>
    <property type="evidence" value="ECO:0000318"/>
    <property type="project" value="GO_Central"/>
</dbReference>
<dbReference type="CDD" id="cd00553">
    <property type="entry name" value="NAD_synthase"/>
    <property type="match status" value="1"/>
</dbReference>
<dbReference type="FunFam" id="3.40.50.620:FF:000015">
    <property type="entry name" value="NH(3)-dependent NAD(+) synthetase"/>
    <property type="match status" value="1"/>
</dbReference>
<dbReference type="Gene3D" id="3.40.50.620">
    <property type="entry name" value="HUPs"/>
    <property type="match status" value="1"/>
</dbReference>
<dbReference type="HAMAP" id="MF_00193">
    <property type="entry name" value="NadE_ammonia_dep"/>
    <property type="match status" value="1"/>
</dbReference>
<dbReference type="InterPro" id="IPR022310">
    <property type="entry name" value="NAD/GMP_synthase"/>
</dbReference>
<dbReference type="InterPro" id="IPR003694">
    <property type="entry name" value="NAD_synthase"/>
</dbReference>
<dbReference type="InterPro" id="IPR022926">
    <property type="entry name" value="NH(3)-dep_NAD(+)_synth"/>
</dbReference>
<dbReference type="InterPro" id="IPR014729">
    <property type="entry name" value="Rossmann-like_a/b/a_fold"/>
</dbReference>
<dbReference type="NCBIfam" id="TIGR00552">
    <property type="entry name" value="nadE"/>
    <property type="match status" value="1"/>
</dbReference>
<dbReference type="NCBIfam" id="NF001979">
    <property type="entry name" value="PRK00768.1"/>
    <property type="match status" value="1"/>
</dbReference>
<dbReference type="PANTHER" id="PTHR23090">
    <property type="entry name" value="NH 3 /GLUTAMINE-DEPENDENT NAD + SYNTHETASE"/>
    <property type="match status" value="1"/>
</dbReference>
<dbReference type="PANTHER" id="PTHR23090:SF7">
    <property type="entry name" value="NH(3)-DEPENDENT NAD(+) SYNTHETASE"/>
    <property type="match status" value="1"/>
</dbReference>
<dbReference type="Pfam" id="PF02540">
    <property type="entry name" value="NAD_synthase"/>
    <property type="match status" value="1"/>
</dbReference>
<dbReference type="SUPFAM" id="SSF52402">
    <property type="entry name" value="Adenine nucleotide alpha hydrolases-like"/>
    <property type="match status" value="1"/>
</dbReference>